<feature type="chain" id="PRO_1000077863" description="UvrABC system protein B">
    <location>
        <begin position="1"/>
        <end position="653"/>
    </location>
</feature>
<feature type="domain" description="Helicase ATP-binding" evidence="1">
    <location>
        <begin position="25"/>
        <end position="182"/>
    </location>
</feature>
<feature type="domain" description="Helicase C-terminal" evidence="1">
    <location>
        <begin position="429"/>
        <end position="591"/>
    </location>
</feature>
<feature type="domain" description="UVR" evidence="1">
    <location>
        <begin position="616"/>
        <end position="651"/>
    </location>
</feature>
<feature type="short sequence motif" description="Beta-hairpin">
    <location>
        <begin position="91"/>
        <end position="114"/>
    </location>
</feature>
<feature type="binding site" evidence="1">
    <location>
        <begin position="38"/>
        <end position="45"/>
    </location>
    <ligand>
        <name>ATP</name>
        <dbReference type="ChEBI" id="CHEBI:30616"/>
    </ligand>
</feature>
<reference key="1">
    <citation type="journal article" date="2006" name="PLoS Genet.">
        <title>Comparative genomics of emerging human ehrlichiosis agents.</title>
        <authorList>
            <person name="Dunning Hotopp J.C."/>
            <person name="Lin M."/>
            <person name="Madupu R."/>
            <person name="Crabtree J."/>
            <person name="Angiuoli S.V."/>
            <person name="Eisen J.A."/>
            <person name="Seshadri R."/>
            <person name="Ren Q."/>
            <person name="Wu M."/>
            <person name="Utterback T.R."/>
            <person name="Smith S."/>
            <person name="Lewis M."/>
            <person name="Khouri H."/>
            <person name="Zhang C."/>
            <person name="Niu H."/>
            <person name="Lin Q."/>
            <person name="Ohashi N."/>
            <person name="Zhi N."/>
            <person name="Nelson W.C."/>
            <person name="Brinkac L.M."/>
            <person name="Dodson R.J."/>
            <person name="Rosovitz M.J."/>
            <person name="Sundaram J.P."/>
            <person name="Daugherty S.C."/>
            <person name="Davidsen T."/>
            <person name="Durkin A.S."/>
            <person name="Gwinn M.L."/>
            <person name="Haft D.H."/>
            <person name="Selengut J.D."/>
            <person name="Sullivan S.A."/>
            <person name="Zafar N."/>
            <person name="Zhou L."/>
            <person name="Benahmed F."/>
            <person name="Forberger H."/>
            <person name="Halpin R."/>
            <person name="Mulligan S."/>
            <person name="Robinson J."/>
            <person name="White O."/>
            <person name="Rikihisa Y."/>
            <person name="Tettelin H."/>
        </authorList>
    </citation>
    <scope>NUCLEOTIDE SEQUENCE [LARGE SCALE GENOMIC DNA]</scope>
    <source>
        <strain>HZ</strain>
    </source>
</reference>
<accession>Q2GID5</accession>
<comment type="function">
    <text evidence="1">The UvrABC repair system catalyzes the recognition and processing of DNA lesions. A damage recognition complex composed of 2 UvrA and 2 UvrB subunits scans DNA for abnormalities. Upon binding of the UvrA(2)B(2) complex to a putative damaged site, the DNA wraps around one UvrB monomer. DNA wrap is dependent on ATP binding by UvrB and probably causes local melting of the DNA helix, facilitating insertion of UvrB beta-hairpin between the DNA strands. Then UvrB probes one DNA strand for the presence of a lesion. If a lesion is found the UvrA subunits dissociate and the UvrB-DNA preincision complex is formed. This complex is subsequently bound by UvrC and the second UvrB is released. If no lesion is found, the DNA wraps around the other UvrB subunit that will check the other stand for damage.</text>
</comment>
<comment type="subunit">
    <text evidence="1">Forms a heterotetramer with UvrA during the search for lesions. Interacts with UvrC in an incision complex.</text>
</comment>
<comment type="subcellular location">
    <subcellularLocation>
        <location evidence="1">Cytoplasm</location>
    </subcellularLocation>
</comment>
<comment type="domain">
    <text evidence="1">The beta-hairpin motif is involved in DNA binding.</text>
</comment>
<comment type="similarity">
    <text evidence="1">Belongs to the UvrB family.</text>
</comment>
<keyword id="KW-0067">ATP-binding</keyword>
<keyword id="KW-0963">Cytoplasm</keyword>
<keyword id="KW-0227">DNA damage</keyword>
<keyword id="KW-0228">DNA excision</keyword>
<keyword id="KW-0234">DNA repair</keyword>
<keyword id="KW-0267">Excision nuclease</keyword>
<keyword id="KW-0347">Helicase</keyword>
<keyword id="KW-0378">Hydrolase</keyword>
<keyword id="KW-0547">Nucleotide-binding</keyword>
<keyword id="KW-0742">SOS response</keyword>
<protein>
    <recommendedName>
        <fullName evidence="1">UvrABC system protein B</fullName>
        <shortName evidence="1">Protein UvrB</shortName>
    </recommendedName>
    <alternativeName>
        <fullName evidence="1">Excinuclease ABC subunit B</fullName>
    </alternativeName>
</protein>
<gene>
    <name evidence="1" type="primary">uvrB</name>
    <name type="ordered locus">APH_1367</name>
</gene>
<name>UVRB_ANAPZ</name>
<dbReference type="EMBL" id="CP000235">
    <property type="protein sequence ID" value="ABD43961.1"/>
    <property type="molecule type" value="Genomic_DNA"/>
</dbReference>
<dbReference type="RefSeq" id="WP_011451372.1">
    <property type="nucleotide sequence ID" value="NC_007797.1"/>
</dbReference>
<dbReference type="SMR" id="Q2GID5"/>
<dbReference type="STRING" id="212042.APH_1367"/>
<dbReference type="PaxDb" id="212042-APH_1367"/>
<dbReference type="EnsemblBacteria" id="ABD43961">
    <property type="protein sequence ID" value="ABD43961"/>
    <property type="gene ID" value="APH_1367"/>
</dbReference>
<dbReference type="KEGG" id="aph:APH_1367"/>
<dbReference type="eggNOG" id="COG0556">
    <property type="taxonomic scope" value="Bacteria"/>
</dbReference>
<dbReference type="HOGENOM" id="CLU_009621_2_1_5"/>
<dbReference type="Proteomes" id="UP000001943">
    <property type="component" value="Chromosome"/>
</dbReference>
<dbReference type="GO" id="GO:0005737">
    <property type="term" value="C:cytoplasm"/>
    <property type="evidence" value="ECO:0007669"/>
    <property type="project" value="UniProtKB-SubCell"/>
</dbReference>
<dbReference type="GO" id="GO:0009380">
    <property type="term" value="C:excinuclease repair complex"/>
    <property type="evidence" value="ECO:0007669"/>
    <property type="project" value="InterPro"/>
</dbReference>
<dbReference type="GO" id="GO:0005524">
    <property type="term" value="F:ATP binding"/>
    <property type="evidence" value="ECO:0007669"/>
    <property type="project" value="UniProtKB-UniRule"/>
</dbReference>
<dbReference type="GO" id="GO:0016887">
    <property type="term" value="F:ATP hydrolysis activity"/>
    <property type="evidence" value="ECO:0007669"/>
    <property type="project" value="InterPro"/>
</dbReference>
<dbReference type="GO" id="GO:0003677">
    <property type="term" value="F:DNA binding"/>
    <property type="evidence" value="ECO:0007669"/>
    <property type="project" value="UniProtKB-UniRule"/>
</dbReference>
<dbReference type="GO" id="GO:0009381">
    <property type="term" value="F:excinuclease ABC activity"/>
    <property type="evidence" value="ECO:0007669"/>
    <property type="project" value="UniProtKB-UniRule"/>
</dbReference>
<dbReference type="GO" id="GO:0004386">
    <property type="term" value="F:helicase activity"/>
    <property type="evidence" value="ECO:0007669"/>
    <property type="project" value="UniProtKB-KW"/>
</dbReference>
<dbReference type="GO" id="GO:0006289">
    <property type="term" value="P:nucleotide-excision repair"/>
    <property type="evidence" value="ECO:0007669"/>
    <property type="project" value="UniProtKB-UniRule"/>
</dbReference>
<dbReference type="GO" id="GO:0009432">
    <property type="term" value="P:SOS response"/>
    <property type="evidence" value="ECO:0007669"/>
    <property type="project" value="UniProtKB-UniRule"/>
</dbReference>
<dbReference type="CDD" id="cd17916">
    <property type="entry name" value="DEXHc_UvrB"/>
    <property type="match status" value="1"/>
</dbReference>
<dbReference type="CDD" id="cd18790">
    <property type="entry name" value="SF2_C_UvrB"/>
    <property type="match status" value="1"/>
</dbReference>
<dbReference type="Gene3D" id="3.40.50.300">
    <property type="entry name" value="P-loop containing nucleotide triphosphate hydrolases"/>
    <property type="match status" value="3"/>
</dbReference>
<dbReference type="Gene3D" id="4.10.860.10">
    <property type="entry name" value="UVR domain"/>
    <property type="match status" value="1"/>
</dbReference>
<dbReference type="HAMAP" id="MF_00204">
    <property type="entry name" value="UvrB"/>
    <property type="match status" value="1"/>
</dbReference>
<dbReference type="InterPro" id="IPR006935">
    <property type="entry name" value="Helicase/UvrB_N"/>
</dbReference>
<dbReference type="InterPro" id="IPR014001">
    <property type="entry name" value="Helicase_ATP-bd"/>
</dbReference>
<dbReference type="InterPro" id="IPR001650">
    <property type="entry name" value="Helicase_C-like"/>
</dbReference>
<dbReference type="InterPro" id="IPR027417">
    <property type="entry name" value="P-loop_NTPase"/>
</dbReference>
<dbReference type="InterPro" id="IPR001943">
    <property type="entry name" value="UVR_dom"/>
</dbReference>
<dbReference type="InterPro" id="IPR036876">
    <property type="entry name" value="UVR_dom_sf"/>
</dbReference>
<dbReference type="InterPro" id="IPR004807">
    <property type="entry name" value="UvrB"/>
</dbReference>
<dbReference type="InterPro" id="IPR041471">
    <property type="entry name" value="UvrB_inter"/>
</dbReference>
<dbReference type="InterPro" id="IPR024759">
    <property type="entry name" value="UvrB_YAD/RRR_dom"/>
</dbReference>
<dbReference type="NCBIfam" id="NF003673">
    <property type="entry name" value="PRK05298.1"/>
    <property type="match status" value="1"/>
</dbReference>
<dbReference type="NCBIfam" id="TIGR00631">
    <property type="entry name" value="uvrb"/>
    <property type="match status" value="1"/>
</dbReference>
<dbReference type="PANTHER" id="PTHR24029">
    <property type="entry name" value="UVRABC SYSTEM PROTEIN B"/>
    <property type="match status" value="1"/>
</dbReference>
<dbReference type="PANTHER" id="PTHR24029:SF0">
    <property type="entry name" value="UVRABC SYSTEM PROTEIN B"/>
    <property type="match status" value="1"/>
</dbReference>
<dbReference type="Pfam" id="PF00271">
    <property type="entry name" value="Helicase_C"/>
    <property type="match status" value="1"/>
</dbReference>
<dbReference type="Pfam" id="PF04851">
    <property type="entry name" value="ResIII"/>
    <property type="match status" value="1"/>
</dbReference>
<dbReference type="Pfam" id="PF02151">
    <property type="entry name" value="UVR"/>
    <property type="match status" value="1"/>
</dbReference>
<dbReference type="Pfam" id="PF12344">
    <property type="entry name" value="UvrB"/>
    <property type="match status" value="1"/>
</dbReference>
<dbReference type="Pfam" id="PF17757">
    <property type="entry name" value="UvrB_inter"/>
    <property type="match status" value="1"/>
</dbReference>
<dbReference type="SMART" id="SM00487">
    <property type="entry name" value="DEXDc"/>
    <property type="match status" value="1"/>
</dbReference>
<dbReference type="SMART" id="SM00490">
    <property type="entry name" value="HELICc"/>
    <property type="match status" value="1"/>
</dbReference>
<dbReference type="SUPFAM" id="SSF46600">
    <property type="entry name" value="C-terminal UvrC-binding domain of UvrB"/>
    <property type="match status" value="1"/>
</dbReference>
<dbReference type="SUPFAM" id="SSF52540">
    <property type="entry name" value="P-loop containing nucleoside triphosphate hydrolases"/>
    <property type="match status" value="2"/>
</dbReference>
<dbReference type="PROSITE" id="PS51192">
    <property type="entry name" value="HELICASE_ATP_BIND_1"/>
    <property type="match status" value="1"/>
</dbReference>
<dbReference type="PROSITE" id="PS51194">
    <property type="entry name" value="HELICASE_CTER"/>
    <property type="match status" value="1"/>
</dbReference>
<dbReference type="PROSITE" id="PS50151">
    <property type="entry name" value="UVR"/>
    <property type="match status" value="1"/>
</dbReference>
<sequence length="653" mass="73679">MRHFKITSEFDAAGDQPEAIRKLSEGIERGVREQVLLGVTGSGKTFTMASVIEKRQCPALIVAHNKTLAAQLYEEMRMFFPNNAVEYFVSYYDYYQPEAYIPHSDVYIEKDALINEKIDMLRHSATRSILERRDVIVVASVSCIYGLGSPELYSEMTIPLSIGMQIDLCQLKEKLVELQYKSGSQCERGTFSVKGDIVTIFPSHHEDHVWRISMFGDVIESIQEVDNNLGIAVANLEKVKVFPNSHYVTPRPTLMQALSRIEEELQECVINYRKNNKIIEAERILERTKFDIEMMKETGTCKGIENYSRYLCGKAAGEPPNTLLDYLPVDSLMFIDESHITIPQIRSMYNGDRVRKANLITHGFRLPSALDNRPLTFEEWESRKTTLVYVSATPGKYETERTSGVVVEQLIRPTGLVDPICIVKKASGQIADVVNESQATISEGYRVLVTALTKKMAENLSEHMREIGIKVAYLHSDVKTLERMDIIAQLRTGEIDVLIGVNLLREGLDIPECALVCILDADKEGFLRSETSLVQTIGRAARNMNGRVILYADRVTKSMKAAIDETNRRRAVQESYNKAHGITPKSISKSVATSLKDRITVKGTKGSKSKSAAVTEEDIIKLQKEMLLHAENLEFEKALEIRNQINKLSQHKT</sequence>
<proteinExistence type="inferred from homology"/>
<evidence type="ECO:0000255" key="1">
    <source>
        <dbReference type="HAMAP-Rule" id="MF_00204"/>
    </source>
</evidence>
<organism>
    <name type="scientific">Anaplasma phagocytophilum (strain HZ)</name>
    <dbReference type="NCBI Taxonomy" id="212042"/>
    <lineage>
        <taxon>Bacteria</taxon>
        <taxon>Pseudomonadati</taxon>
        <taxon>Pseudomonadota</taxon>
        <taxon>Alphaproteobacteria</taxon>
        <taxon>Rickettsiales</taxon>
        <taxon>Anaplasmataceae</taxon>
        <taxon>Anaplasma</taxon>
        <taxon>phagocytophilum group</taxon>
    </lineage>
</organism>